<name>VU9_HHV6H</name>
<proteinExistence type="predicted"/>
<accession>P0DTO6</accession>
<accession>Q77PV6</accession>
<accession>Q9WT55</accession>
<reference key="1">
    <citation type="journal article" date="1999" name="J. Virol.">
        <title>Comparison of the complete DNA sequences of human herpesvirus 6 variants A and B.</title>
        <authorList>
            <person name="Isegawa Y."/>
            <person name="Mukai T."/>
            <person name="Nakano K."/>
            <person name="Kagawa M."/>
            <person name="Chen J."/>
            <person name="Mori Y."/>
            <person name="Sunagawa T."/>
            <person name="Kawanishi K."/>
            <person name="Sashihara J."/>
            <person name="Hata A."/>
            <person name="Zou P."/>
            <person name="Kosuge H."/>
            <person name="Yamanishi K."/>
        </authorList>
    </citation>
    <scope>NUCLEOTIDE SEQUENCE [LARGE SCALE GENOMIC DNA]</scope>
    <source>
        <strain>HST</strain>
    </source>
</reference>
<gene>
    <name type="primary">U9</name>
</gene>
<organism>
    <name type="scientific">Human herpesvirus 6B</name>
    <name type="common">HHV-6 variant B</name>
    <name type="synonym">Human B lymphotropic virus</name>
    <dbReference type="NCBI Taxonomy" id="32604"/>
    <lineage>
        <taxon>Viruses</taxon>
        <taxon>Duplodnaviria</taxon>
        <taxon>Heunggongvirae</taxon>
        <taxon>Peploviricota</taxon>
        <taxon>Herviviricetes</taxon>
        <taxon>Herpesvirales</taxon>
        <taxon>Orthoherpesviridae</taxon>
        <taxon>Betaherpesvirinae</taxon>
        <taxon>Roseolovirus</taxon>
        <taxon>Roseolovirus humanbeta6b</taxon>
    </lineage>
</organism>
<dbReference type="EMBL" id="AB021506">
    <property type="protein sequence ID" value="BAA78229.1"/>
    <property type="molecule type" value="Genomic_DNA"/>
</dbReference>
<dbReference type="PIR" id="T43968">
    <property type="entry name" value="T43968"/>
</dbReference>
<dbReference type="RefSeq" id="NP_050190.1">
    <property type="nucleotide sequence ID" value="NC_000898.1"/>
</dbReference>
<dbReference type="GeneID" id="1497009"/>
<dbReference type="KEGG" id="vg:1497009"/>
<dbReference type="Proteomes" id="UP000142685">
    <property type="component" value="Segment"/>
</dbReference>
<dbReference type="GO" id="GO:0033644">
    <property type="term" value="C:host cell membrane"/>
    <property type="evidence" value="ECO:0007669"/>
    <property type="project" value="UniProtKB-SubCell"/>
</dbReference>
<dbReference type="GO" id="GO:0016020">
    <property type="term" value="C:membrane"/>
    <property type="evidence" value="ECO:0007669"/>
    <property type="project" value="UniProtKB-KW"/>
</dbReference>
<keyword id="KW-1043">Host membrane</keyword>
<keyword id="KW-0472">Membrane</keyword>
<keyword id="KW-0812">Transmembrane</keyword>
<keyword id="KW-1133">Transmembrane helix</keyword>
<evidence type="ECO:0000255" key="1"/>
<evidence type="ECO:0000305" key="2"/>
<feature type="chain" id="PRO_0000461153" description="Protein U9">
    <location>
        <begin position="1"/>
        <end position="104"/>
    </location>
</feature>
<feature type="transmembrane region" description="Helical" evidence="1">
    <location>
        <begin position="37"/>
        <end position="54"/>
    </location>
</feature>
<organismHost>
    <name type="scientific">Homo sapiens</name>
    <name type="common">Human</name>
    <dbReference type="NCBI Taxonomy" id="9606"/>
</organismHost>
<protein>
    <recommendedName>
        <fullName>Protein U9</fullName>
    </recommendedName>
</protein>
<comment type="subcellular location">
    <subcellularLocation>
        <location evidence="2">Host membrane</location>
        <topology evidence="2">Single-pass membrane protein</topology>
    </subcellularLocation>
</comment>
<sequence length="104" mass="11644">MAVRKLWKTVVQLFSKSKSEECNTEAGTMEVSCLKYGVQGLNADCSYVKSQCIKLSECECLYTFASDVCKEDFHNSEEMKVFVVQHSQEIVGGTDFSVHAEESV</sequence>